<reference key="1">
    <citation type="submission" date="2002-06" db="EMBL/GenBank/DDBJ databases">
        <title>L-lactate dehydrogenase gene of Clostridium thermocellum.</title>
        <authorList>
            <person name="Ozkan M."/>
            <person name="Lynd L.R."/>
            <person name="Ozcengiz G."/>
        </authorList>
    </citation>
    <scope>NUCLEOTIDE SEQUENCE [GENOMIC DNA]</scope>
</reference>
<reference key="2">
    <citation type="submission" date="2007-02" db="EMBL/GenBank/DDBJ databases">
        <title>Complete sequence of Clostridium thermocellum ATCC 27405.</title>
        <authorList>
            <consortium name="US DOE Joint Genome Institute"/>
            <person name="Copeland A."/>
            <person name="Lucas S."/>
            <person name="Lapidus A."/>
            <person name="Barry K."/>
            <person name="Detter J.C."/>
            <person name="Glavina del Rio T."/>
            <person name="Hammon N."/>
            <person name="Israni S."/>
            <person name="Dalin E."/>
            <person name="Tice H."/>
            <person name="Pitluck S."/>
            <person name="Chertkov O."/>
            <person name="Brettin T."/>
            <person name="Bruce D."/>
            <person name="Han C."/>
            <person name="Tapia R."/>
            <person name="Gilna P."/>
            <person name="Schmutz J."/>
            <person name="Larimer F."/>
            <person name="Land M."/>
            <person name="Hauser L."/>
            <person name="Kyrpides N."/>
            <person name="Mikhailova N."/>
            <person name="Wu J.H.D."/>
            <person name="Newcomb M."/>
            <person name="Richardson P."/>
        </authorList>
    </citation>
    <scope>NUCLEOTIDE SEQUENCE [LARGE SCALE GENOMIC DNA]</scope>
    <source>
        <strain>ATCC 27405 / DSM 1237 / JCM 9322 / NBRC 103400 / NCIMB 10682 / NRRL B-4536 / VPI 7372</strain>
    </source>
</reference>
<evidence type="ECO:0000255" key="1">
    <source>
        <dbReference type="HAMAP-Rule" id="MF_00488"/>
    </source>
</evidence>
<evidence type="ECO:0000305" key="2"/>
<accession>Q8KQC4</accession>
<accession>A3DEA6</accession>
<comment type="function">
    <text evidence="1">Catalyzes the conversion of lactate to pyruvate.</text>
</comment>
<comment type="catalytic activity">
    <reaction evidence="1">
        <text>(S)-lactate + NAD(+) = pyruvate + NADH + H(+)</text>
        <dbReference type="Rhea" id="RHEA:23444"/>
        <dbReference type="ChEBI" id="CHEBI:15361"/>
        <dbReference type="ChEBI" id="CHEBI:15378"/>
        <dbReference type="ChEBI" id="CHEBI:16651"/>
        <dbReference type="ChEBI" id="CHEBI:57540"/>
        <dbReference type="ChEBI" id="CHEBI:57945"/>
        <dbReference type="EC" id="1.1.1.27"/>
    </reaction>
</comment>
<comment type="activity regulation">
    <text evidence="1">Allosterically activated by fructose 1,6-bisphosphate (FBP).</text>
</comment>
<comment type="pathway">
    <text evidence="1">Fermentation; pyruvate fermentation to lactate; (S)-lactate from pyruvate: step 1/1.</text>
</comment>
<comment type="subunit">
    <text evidence="1">Homotetramer.</text>
</comment>
<comment type="subcellular location">
    <subcellularLocation>
        <location evidence="1">Cytoplasm</location>
    </subcellularLocation>
</comment>
<comment type="similarity">
    <text evidence="1">Belongs to the LDH/MDH superfamily. LDH family.</text>
</comment>
<keyword id="KW-0021">Allosteric enzyme</keyword>
<keyword id="KW-0963">Cytoplasm</keyword>
<keyword id="KW-0520">NAD</keyword>
<keyword id="KW-0560">Oxidoreductase</keyword>
<keyword id="KW-0597">Phosphoprotein</keyword>
<keyword id="KW-1185">Reference proteome</keyword>
<organism>
    <name type="scientific">Acetivibrio thermocellus (strain ATCC 27405 / DSM 1237 / JCM 9322 / NBRC 103400 / NCIMB 10682 / NRRL B-4536 / VPI 7372)</name>
    <name type="common">Clostridium thermocellum</name>
    <dbReference type="NCBI Taxonomy" id="203119"/>
    <lineage>
        <taxon>Bacteria</taxon>
        <taxon>Bacillati</taxon>
        <taxon>Bacillota</taxon>
        <taxon>Clostridia</taxon>
        <taxon>Eubacteriales</taxon>
        <taxon>Oscillospiraceae</taxon>
        <taxon>Acetivibrio</taxon>
    </lineage>
</organism>
<name>LDH_ACET2</name>
<gene>
    <name evidence="1" type="primary">ldh</name>
    <name type="ordered locus">Cthe_1053</name>
</gene>
<feature type="chain" id="PRO_0000168337" description="L-lactate dehydrogenase">
    <location>
        <begin position="1"/>
        <end position="317"/>
    </location>
</feature>
<feature type="active site" description="Proton acceptor" evidence="1">
    <location>
        <position position="179"/>
    </location>
</feature>
<feature type="binding site" evidence="1">
    <location>
        <position position="18"/>
    </location>
    <ligand>
        <name>NAD(+)</name>
        <dbReference type="ChEBI" id="CHEBI:57540"/>
    </ligand>
</feature>
<feature type="binding site" evidence="1">
    <location>
        <position position="39"/>
    </location>
    <ligand>
        <name>NAD(+)</name>
        <dbReference type="ChEBI" id="CHEBI:57540"/>
    </ligand>
</feature>
<feature type="binding site" evidence="1">
    <location>
        <position position="44"/>
    </location>
    <ligand>
        <name>NAD(+)</name>
        <dbReference type="ChEBI" id="CHEBI:57540"/>
    </ligand>
</feature>
<feature type="binding site" evidence="1">
    <location>
        <position position="69"/>
    </location>
    <ligand>
        <name>NAD(+)</name>
        <dbReference type="ChEBI" id="CHEBI:57540"/>
    </ligand>
</feature>
<feature type="binding site" evidence="1">
    <location>
        <begin position="83"/>
        <end position="84"/>
    </location>
    <ligand>
        <name>NAD(+)</name>
        <dbReference type="ChEBI" id="CHEBI:57540"/>
    </ligand>
</feature>
<feature type="binding site" evidence="1">
    <location>
        <position position="86"/>
    </location>
    <ligand>
        <name>substrate</name>
    </ligand>
</feature>
<feature type="binding site" evidence="1">
    <location>
        <position position="92"/>
    </location>
    <ligand>
        <name>substrate</name>
    </ligand>
</feature>
<feature type="binding site" evidence="1">
    <location>
        <begin position="122"/>
        <end position="124"/>
    </location>
    <ligand>
        <name>NAD(+)</name>
        <dbReference type="ChEBI" id="CHEBI:57540"/>
    </ligand>
</feature>
<feature type="binding site" evidence="1">
    <location>
        <begin position="124"/>
        <end position="127"/>
    </location>
    <ligand>
        <name>substrate</name>
    </ligand>
</feature>
<feature type="binding site" evidence="1">
    <location>
        <position position="147"/>
    </location>
    <ligand>
        <name>NAD(+)</name>
        <dbReference type="ChEBI" id="CHEBI:57540"/>
    </ligand>
</feature>
<feature type="binding site" evidence="1">
    <location>
        <begin position="152"/>
        <end position="155"/>
    </location>
    <ligand>
        <name>substrate</name>
    </ligand>
</feature>
<feature type="binding site" evidence="1">
    <location>
        <position position="157"/>
    </location>
    <ligand>
        <name>beta-D-fructose 1,6-bisphosphate</name>
        <dbReference type="ChEBI" id="CHEBI:32966"/>
        <note>allosteric activator</note>
    </ligand>
</feature>
<feature type="binding site" evidence="1">
    <location>
        <position position="172"/>
    </location>
    <ligand>
        <name>beta-D-fructose 1,6-bisphosphate</name>
        <dbReference type="ChEBI" id="CHEBI:32966"/>
        <note>allosteric activator</note>
    </ligand>
</feature>
<feature type="binding site" evidence="1">
    <location>
        <position position="234"/>
    </location>
    <ligand>
        <name>substrate</name>
    </ligand>
</feature>
<feature type="modified residue" description="Phosphotyrosine" evidence="1">
    <location>
        <position position="225"/>
    </location>
</feature>
<feature type="sequence conflict" description="In Ref. 1; AAM29186." evidence="2" ref="1">
    <original>LVV</original>
    <variation>VA</variation>
    <location>
        <begin position="120"/>
        <end position="122"/>
    </location>
</feature>
<feature type="sequence conflict" description="In Ref. 1; AAM29186." evidence="2" ref="1">
    <original>NKV</original>
    <variation>QI</variation>
    <location>
        <begin position="142"/>
        <end position="144"/>
    </location>
</feature>
<feature type="sequence conflict" description="In Ref. 1; AAM29186." evidence="2" ref="1">
    <original>L</original>
    <variation>H</variation>
    <location>
        <position position="308"/>
    </location>
</feature>
<protein>
    <recommendedName>
        <fullName evidence="1">L-lactate dehydrogenase</fullName>
        <shortName evidence="1">L-LDH</shortName>
        <ecNumber evidence="1">1.1.1.27</ecNumber>
    </recommendedName>
</protein>
<proteinExistence type="inferred from homology"/>
<dbReference type="EC" id="1.1.1.27" evidence="1"/>
<dbReference type="EMBL" id="AY098994">
    <property type="protein sequence ID" value="AAM29186.2"/>
    <property type="molecule type" value="Genomic_DNA"/>
</dbReference>
<dbReference type="EMBL" id="CP000568">
    <property type="protein sequence ID" value="ABN52285.1"/>
    <property type="molecule type" value="Genomic_DNA"/>
</dbReference>
<dbReference type="RefSeq" id="WP_003515661.1">
    <property type="nucleotide sequence ID" value="NC_009012.1"/>
</dbReference>
<dbReference type="SMR" id="Q8KQC4"/>
<dbReference type="STRING" id="203119.Cthe_1053"/>
<dbReference type="GeneID" id="35805956"/>
<dbReference type="KEGG" id="cth:Cthe_1053"/>
<dbReference type="eggNOG" id="COG0039">
    <property type="taxonomic scope" value="Bacteria"/>
</dbReference>
<dbReference type="HOGENOM" id="CLU_045401_1_1_9"/>
<dbReference type="OrthoDB" id="9802969at2"/>
<dbReference type="UniPathway" id="UPA00554">
    <property type="reaction ID" value="UER00611"/>
</dbReference>
<dbReference type="Proteomes" id="UP000002145">
    <property type="component" value="Chromosome"/>
</dbReference>
<dbReference type="GO" id="GO:0005737">
    <property type="term" value="C:cytoplasm"/>
    <property type="evidence" value="ECO:0007669"/>
    <property type="project" value="UniProtKB-SubCell"/>
</dbReference>
<dbReference type="GO" id="GO:0004459">
    <property type="term" value="F:L-lactate dehydrogenase activity"/>
    <property type="evidence" value="ECO:0007669"/>
    <property type="project" value="UniProtKB-UniRule"/>
</dbReference>
<dbReference type="GO" id="GO:0006096">
    <property type="term" value="P:glycolytic process"/>
    <property type="evidence" value="ECO:0007669"/>
    <property type="project" value="UniProtKB-UniRule"/>
</dbReference>
<dbReference type="GO" id="GO:0006089">
    <property type="term" value="P:lactate metabolic process"/>
    <property type="evidence" value="ECO:0007669"/>
    <property type="project" value="TreeGrafter"/>
</dbReference>
<dbReference type="CDD" id="cd05292">
    <property type="entry name" value="LDH_2"/>
    <property type="match status" value="1"/>
</dbReference>
<dbReference type="FunFam" id="3.40.50.720:FF:000018">
    <property type="entry name" value="Malate dehydrogenase"/>
    <property type="match status" value="1"/>
</dbReference>
<dbReference type="Gene3D" id="3.90.110.10">
    <property type="entry name" value="Lactate dehydrogenase/glycoside hydrolase, family 4, C-terminal"/>
    <property type="match status" value="1"/>
</dbReference>
<dbReference type="Gene3D" id="3.40.50.720">
    <property type="entry name" value="NAD(P)-binding Rossmann-like Domain"/>
    <property type="match status" value="1"/>
</dbReference>
<dbReference type="HAMAP" id="MF_00488">
    <property type="entry name" value="Lactate_dehydrog"/>
    <property type="match status" value="1"/>
</dbReference>
<dbReference type="InterPro" id="IPR001557">
    <property type="entry name" value="L-lactate/malate_DH"/>
</dbReference>
<dbReference type="InterPro" id="IPR011304">
    <property type="entry name" value="L-lactate_DH"/>
</dbReference>
<dbReference type="InterPro" id="IPR018177">
    <property type="entry name" value="L-lactate_DH_AS"/>
</dbReference>
<dbReference type="InterPro" id="IPR022383">
    <property type="entry name" value="Lactate/malate_DH_C"/>
</dbReference>
<dbReference type="InterPro" id="IPR001236">
    <property type="entry name" value="Lactate/malate_DH_N"/>
</dbReference>
<dbReference type="InterPro" id="IPR015955">
    <property type="entry name" value="Lactate_DH/Glyco_Ohase_4_C"/>
</dbReference>
<dbReference type="InterPro" id="IPR036291">
    <property type="entry name" value="NAD(P)-bd_dom_sf"/>
</dbReference>
<dbReference type="NCBIfam" id="TIGR01771">
    <property type="entry name" value="L-LDH-NAD"/>
    <property type="match status" value="1"/>
</dbReference>
<dbReference type="NCBIfam" id="NF000824">
    <property type="entry name" value="PRK00066.1"/>
    <property type="match status" value="1"/>
</dbReference>
<dbReference type="NCBIfam" id="NF004863">
    <property type="entry name" value="PRK06223.1"/>
    <property type="match status" value="1"/>
</dbReference>
<dbReference type="PANTHER" id="PTHR43128">
    <property type="entry name" value="L-2-HYDROXYCARBOXYLATE DEHYDROGENASE (NAD(P)(+))"/>
    <property type="match status" value="1"/>
</dbReference>
<dbReference type="PANTHER" id="PTHR43128:SF16">
    <property type="entry name" value="L-LACTATE DEHYDROGENASE"/>
    <property type="match status" value="1"/>
</dbReference>
<dbReference type="Pfam" id="PF02866">
    <property type="entry name" value="Ldh_1_C"/>
    <property type="match status" value="1"/>
</dbReference>
<dbReference type="Pfam" id="PF00056">
    <property type="entry name" value="Ldh_1_N"/>
    <property type="match status" value="1"/>
</dbReference>
<dbReference type="PIRSF" id="PIRSF000102">
    <property type="entry name" value="Lac_mal_DH"/>
    <property type="match status" value="1"/>
</dbReference>
<dbReference type="PRINTS" id="PR00086">
    <property type="entry name" value="LLDHDRGNASE"/>
</dbReference>
<dbReference type="SUPFAM" id="SSF56327">
    <property type="entry name" value="LDH C-terminal domain-like"/>
    <property type="match status" value="1"/>
</dbReference>
<dbReference type="SUPFAM" id="SSF51735">
    <property type="entry name" value="NAD(P)-binding Rossmann-fold domains"/>
    <property type="match status" value="1"/>
</dbReference>
<dbReference type="PROSITE" id="PS00064">
    <property type="entry name" value="L_LDH"/>
    <property type="match status" value="1"/>
</dbReference>
<sequence length="317" mass="35075">MNNNKVIKKVTVVGAGFVGSTTAYTLMLSGLISEIVLIDINAKKADGEVMDLNHGMPFVRPVEIYRGDYKDCAGSDIVIITAGANQKEGETRIDLVKRNTEVFKNIINEIVKYNNDCILLVVTNPVDILTYVTYKLSGFPKNKVIGSGTVLDTARFRYLLSEHVKVDARNVHAYIIGEHGDTEVAAWSLANIAGIPMDRYCDECHQCEEQISRNKIYESVKNAAYEIIRNKGATYYAVALAVRRIVEAIVRNENSILTVSSLLEGQYGLSDVCLSVPTIVGVNGIEEILNVPFNDEEIQLLRKSGNTLKEIIKTLDI</sequence>